<feature type="chain" id="PRO_0000296788" description="DNA-directed RNA polymerase subunit alpha">
    <location>
        <begin position="1"/>
        <end position="325"/>
    </location>
</feature>
<feature type="region of interest" description="Alpha N-terminal domain (alpha-NTD)" evidence="1">
    <location>
        <begin position="1"/>
        <end position="231"/>
    </location>
</feature>
<feature type="region of interest" description="Alpha C-terminal domain (alpha-CTD)" evidence="1">
    <location>
        <begin position="246"/>
        <end position="325"/>
    </location>
</feature>
<reference key="1">
    <citation type="submission" date="2006-08" db="EMBL/GenBank/DDBJ databases">
        <title>Complete sequence of chromosome 1 of Burkholderia cenocepacia HI2424.</title>
        <authorList>
            <person name="Copeland A."/>
            <person name="Lucas S."/>
            <person name="Lapidus A."/>
            <person name="Barry K."/>
            <person name="Detter J.C."/>
            <person name="Glavina del Rio T."/>
            <person name="Hammon N."/>
            <person name="Israni S."/>
            <person name="Pitluck S."/>
            <person name="Chain P."/>
            <person name="Malfatti S."/>
            <person name="Shin M."/>
            <person name="Vergez L."/>
            <person name="Schmutz J."/>
            <person name="Larimer F."/>
            <person name="Land M."/>
            <person name="Hauser L."/>
            <person name="Kyrpides N."/>
            <person name="Kim E."/>
            <person name="LiPuma J.J."/>
            <person name="Gonzalez C.F."/>
            <person name="Konstantinidis K."/>
            <person name="Tiedje J.M."/>
            <person name="Richardson P."/>
        </authorList>
    </citation>
    <scope>NUCLEOTIDE SEQUENCE [LARGE SCALE GENOMIC DNA]</scope>
    <source>
        <strain>HI2424</strain>
    </source>
</reference>
<sequence length="325" mass="35697">MQTSLLKPKIIAVESLGENHARVVMEPFERGYGHTLGNALRRVLLSSMVGYAPTEVTIAGVVHEYSTLDGVQEDVVNLLLNLKGVVFKLHNRDEVTVTLRKEGEGVVTAGDIELAHDCEVINPNHVIAHLSKGGKLDVQIKIEKGRGYVPGNVRRYGEDTAKIIGRIVLDASFSPVRRVSYAVESARVEQRTDLDKLVMNIETSGVITPEEAIRQSARILVDQLSVFAALEGTETAAEAPSRAPQIDPILLRPVDDLELTVRSANCLKAENIYYIGDLIQRTENELLKTPNLGRKSLNEIKEVLASRGLTLGMKLENWPPAGLDK</sequence>
<proteinExistence type="inferred from homology"/>
<organism>
    <name type="scientific">Burkholderia cenocepacia (strain HI2424)</name>
    <dbReference type="NCBI Taxonomy" id="331272"/>
    <lineage>
        <taxon>Bacteria</taxon>
        <taxon>Pseudomonadati</taxon>
        <taxon>Pseudomonadota</taxon>
        <taxon>Betaproteobacteria</taxon>
        <taxon>Burkholderiales</taxon>
        <taxon>Burkholderiaceae</taxon>
        <taxon>Burkholderia</taxon>
        <taxon>Burkholderia cepacia complex</taxon>
    </lineage>
</organism>
<name>RPOA_BURCH</name>
<comment type="function">
    <text evidence="1">DNA-dependent RNA polymerase catalyzes the transcription of DNA into RNA using the four ribonucleoside triphosphates as substrates.</text>
</comment>
<comment type="catalytic activity">
    <reaction evidence="1">
        <text>RNA(n) + a ribonucleoside 5'-triphosphate = RNA(n+1) + diphosphate</text>
        <dbReference type="Rhea" id="RHEA:21248"/>
        <dbReference type="Rhea" id="RHEA-COMP:14527"/>
        <dbReference type="Rhea" id="RHEA-COMP:17342"/>
        <dbReference type="ChEBI" id="CHEBI:33019"/>
        <dbReference type="ChEBI" id="CHEBI:61557"/>
        <dbReference type="ChEBI" id="CHEBI:140395"/>
        <dbReference type="EC" id="2.7.7.6"/>
    </reaction>
</comment>
<comment type="subunit">
    <text evidence="1">Homodimer. The RNAP catalytic core consists of 2 alpha, 1 beta, 1 beta' and 1 omega subunit. When a sigma factor is associated with the core the holoenzyme is formed, which can initiate transcription.</text>
</comment>
<comment type="domain">
    <text evidence="1">The N-terminal domain is essential for RNAP assembly and basal transcription, whereas the C-terminal domain is involved in interaction with transcriptional regulators and with upstream promoter elements.</text>
</comment>
<comment type="similarity">
    <text evidence="1">Belongs to the RNA polymerase alpha chain family.</text>
</comment>
<gene>
    <name evidence="1" type="primary">rpoA</name>
    <name type="ordered locus">Bcen2424_0374</name>
</gene>
<keyword id="KW-0240">DNA-directed RNA polymerase</keyword>
<keyword id="KW-0548">Nucleotidyltransferase</keyword>
<keyword id="KW-0804">Transcription</keyword>
<keyword id="KW-0808">Transferase</keyword>
<dbReference type="EC" id="2.7.7.6" evidence="1"/>
<dbReference type="EMBL" id="CP000458">
    <property type="protein sequence ID" value="ABK07128.1"/>
    <property type="molecule type" value="Genomic_DNA"/>
</dbReference>
<dbReference type="RefSeq" id="WP_006477176.1">
    <property type="nucleotide sequence ID" value="NC_008542.1"/>
</dbReference>
<dbReference type="SMR" id="A0K3Q1"/>
<dbReference type="GeneID" id="98107134"/>
<dbReference type="KEGG" id="bch:Bcen2424_0374"/>
<dbReference type="HOGENOM" id="CLU_053084_0_0_4"/>
<dbReference type="GO" id="GO:0005737">
    <property type="term" value="C:cytoplasm"/>
    <property type="evidence" value="ECO:0007669"/>
    <property type="project" value="UniProtKB-ARBA"/>
</dbReference>
<dbReference type="GO" id="GO:0000428">
    <property type="term" value="C:DNA-directed RNA polymerase complex"/>
    <property type="evidence" value="ECO:0007669"/>
    <property type="project" value="UniProtKB-KW"/>
</dbReference>
<dbReference type="GO" id="GO:0003677">
    <property type="term" value="F:DNA binding"/>
    <property type="evidence" value="ECO:0007669"/>
    <property type="project" value="UniProtKB-UniRule"/>
</dbReference>
<dbReference type="GO" id="GO:0003899">
    <property type="term" value="F:DNA-directed RNA polymerase activity"/>
    <property type="evidence" value="ECO:0007669"/>
    <property type="project" value="UniProtKB-UniRule"/>
</dbReference>
<dbReference type="GO" id="GO:0046983">
    <property type="term" value="F:protein dimerization activity"/>
    <property type="evidence" value="ECO:0007669"/>
    <property type="project" value="InterPro"/>
</dbReference>
<dbReference type="GO" id="GO:0006351">
    <property type="term" value="P:DNA-templated transcription"/>
    <property type="evidence" value="ECO:0007669"/>
    <property type="project" value="UniProtKB-UniRule"/>
</dbReference>
<dbReference type="CDD" id="cd06928">
    <property type="entry name" value="RNAP_alpha_NTD"/>
    <property type="match status" value="1"/>
</dbReference>
<dbReference type="FunFam" id="1.10.150.20:FF:000001">
    <property type="entry name" value="DNA-directed RNA polymerase subunit alpha"/>
    <property type="match status" value="1"/>
</dbReference>
<dbReference type="FunFam" id="2.170.120.12:FF:000001">
    <property type="entry name" value="DNA-directed RNA polymerase subunit alpha"/>
    <property type="match status" value="1"/>
</dbReference>
<dbReference type="Gene3D" id="1.10.150.20">
    <property type="entry name" value="5' to 3' exonuclease, C-terminal subdomain"/>
    <property type="match status" value="1"/>
</dbReference>
<dbReference type="Gene3D" id="2.170.120.12">
    <property type="entry name" value="DNA-directed RNA polymerase, insert domain"/>
    <property type="match status" value="1"/>
</dbReference>
<dbReference type="Gene3D" id="3.30.1360.10">
    <property type="entry name" value="RNA polymerase, RBP11-like subunit"/>
    <property type="match status" value="1"/>
</dbReference>
<dbReference type="HAMAP" id="MF_00059">
    <property type="entry name" value="RNApol_bact_RpoA"/>
    <property type="match status" value="1"/>
</dbReference>
<dbReference type="InterPro" id="IPR011262">
    <property type="entry name" value="DNA-dir_RNA_pol_insert"/>
</dbReference>
<dbReference type="InterPro" id="IPR011263">
    <property type="entry name" value="DNA-dir_RNA_pol_RpoA/D/Rpb3"/>
</dbReference>
<dbReference type="InterPro" id="IPR011773">
    <property type="entry name" value="DNA-dir_RpoA"/>
</dbReference>
<dbReference type="InterPro" id="IPR036603">
    <property type="entry name" value="RBP11-like"/>
</dbReference>
<dbReference type="InterPro" id="IPR011260">
    <property type="entry name" value="RNAP_asu_C"/>
</dbReference>
<dbReference type="InterPro" id="IPR036643">
    <property type="entry name" value="RNApol_insert_sf"/>
</dbReference>
<dbReference type="NCBIfam" id="NF003513">
    <property type="entry name" value="PRK05182.1-2"/>
    <property type="match status" value="1"/>
</dbReference>
<dbReference type="NCBIfam" id="NF003519">
    <property type="entry name" value="PRK05182.2-5"/>
    <property type="match status" value="1"/>
</dbReference>
<dbReference type="NCBIfam" id="TIGR02027">
    <property type="entry name" value="rpoA"/>
    <property type="match status" value="1"/>
</dbReference>
<dbReference type="Pfam" id="PF01000">
    <property type="entry name" value="RNA_pol_A_bac"/>
    <property type="match status" value="1"/>
</dbReference>
<dbReference type="Pfam" id="PF03118">
    <property type="entry name" value="RNA_pol_A_CTD"/>
    <property type="match status" value="1"/>
</dbReference>
<dbReference type="Pfam" id="PF01193">
    <property type="entry name" value="RNA_pol_L"/>
    <property type="match status" value="1"/>
</dbReference>
<dbReference type="SMART" id="SM00662">
    <property type="entry name" value="RPOLD"/>
    <property type="match status" value="1"/>
</dbReference>
<dbReference type="SUPFAM" id="SSF47789">
    <property type="entry name" value="C-terminal domain of RNA polymerase alpha subunit"/>
    <property type="match status" value="1"/>
</dbReference>
<dbReference type="SUPFAM" id="SSF56553">
    <property type="entry name" value="Insert subdomain of RNA polymerase alpha subunit"/>
    <property type="match status" value="1"/>
</dbReference>
<dbReference type="SUPFAM" id="SSF55257">
    <property type="entry name" value="RBP11-like subunits of RNA polymerase"/>
    <property type="match status" value="1"/>
</dbReference>
<accession>A0K3Q1</accession>
<evidence type="ECO:0000255" key="1">
    <source>
        <dbReference type="HAMAP-Rule" id="MF_00059"/>
    </source>
</evidence>
<protein>
    <recommendedName>
        <fullName evidence="1">DNA-directed RNA polymerase subunit alpha</fullName>
        <shortName evidence="1">RNAP subunit alpha</shortName>
        <ecNumber evidence="1">2.7.7.6</ecNumber>
    </recommendedName>
    <alternativeName>
        <fullName evidence="1">RNA polymerase subunit alpha</fullName>
    </alternativeName>
    <alternativeName>
        <fullName evidence="1">Transcriptase subunit alpha</fullName>
    </alternativeName>
</protein>